<comment type="function">
    <text evidence="1">Catalyzes the NADPH-dependent rearrangement and reduction of 1-deoxy-D-xylulose-5-phosphate (DXP) to 2-C-methyl-D-erythritol 4-phosphate (MEP).</text>
</comment>
<comment type="catalytic activity">
    <reaction evidence="1">
        <text>2-C-methyl-D-erythritol 4-phosphate + NADP(+) = 1-deoxy-D-xylulose 5-phosphate + NADPH + H(+)</text>
        <dbReference type="Rhea" id="RHEA:13717"/>
        <dbReference type="ChEBI" id="CHEBI:15378"/>
        <dbReference type="ChEBI" id="CHEBI:57783"/>
        <dbReference type="ChEBI" id="CHEBI:57792"/>
        <dbReference type="ChEBI" id="CHEBI:58262"/>
        <dbReference type="ChEBI" id="CHEBI:58349"/>
        <dbReference type="EC" id="1.1.1.267"/>
    </reaction>
    <physiologicalReaction direction="right-to-left" evidence="1">
        <dbReference type="Rhea" id="RHEA:13719"/>
    </physiologicalReaction>
</comment>
<comment type="cofactor">
    <cofactor evidence="1">
        <name>Mg(2+)</name>
        <dbReference type="ChEBI" id="CHEBI:18420"/>
    </cofactor>
    <cofactor evidence="1">
        <name>Mn(2+)</name>
        <dbReference type="ChEBI" id="CHEBI:29035"/>
    </cofactor>
</comment>
<comment type="pathway">
    <text evidence="1">Isoprenoid biosynthesis; isopentenyl diphosphate biosynthesis via DXP pathway; isopentenyl diphosphate from 1-deoxy-D-xylulose 5-phosphate: step 1/6.</text>
</comment>
<comment type="similarity">
    <text evidence="1">Belongs to the DXR family.</text>
</comment>
<evidence type="ECO:0000255" key="1">
    <source>
        <dbReference type="HAMAP-Rule" id="MF_00183"/>
    </source>
</evidence>
<dbReference type="EC" id="1.1.1.267" evidence="1"/>
<dbReference type="EMBL" id="CP000577">
    <property type="protein sequence ID" value="ABN76476.1"/>
    <property type="molecule type" value="Genomic_DNA"/>
</dbReference>
<dbReference type="RefSeq" id="WP_011840973.1">
    <property type="nucleotide sequence ID" value="NC_009049.1"/>
</dbReference>
<dbReference type="SMR" id="A3PJG0"/>
<dbReference type="KEGG" id="rsh:Rsph17029_1366"/>
<dbReference type="HOGENOM" id="CLU_035714_4_0_5"/>
<dbReference type="UniPathway" id="UPA00056">
    <property type="reaction ID" value="UER00092"/>
</dbReference>
<dbReference type="GO" id="GO:0030604">
    <property type="term" value="F:1-deoxy-D-xylulose-5-phosphate reductoisomerase activity"/>
    <property type="evidence" value="ECO:0007669"/>
    <property type="project" value="UniProtKB-UniRule"/>
</dbReference>
<dbReference type="GO" id="GO:0030145">
    <property type="term" value="F:manganese ion binding"/>
    <property type="evidence" value="ECO:0007669"/>
    <property type="project" value="TreeGrafter"/>
</dbReference>
<dbReference type="GO" id="GO:0070402">
    <property type="term" value="F:NADPH binding"/>
    <property type="evidence" value="ECO:0007669"/>
    <property type="project" value="InterPro"/>
</dbReference>
<dbReference type="GO" id="GO:0051484">
    <property type="term" value="P:isopentenyl diphosphate biosynthetic process, methylerythritol 4-phosphate pathway involved in terpenoid biosynthetic process"/>
    <property type="evidence" value="ECO:0007669"/>
    <property type="project" value="TreeGrafter"/>
</dbReference>
<dbReference type="FunFam" id="3.40.50.720:FF:000045">
    <property type="entry name" value="1-deoxy-D-xylulose 5-phosphate reductoisomerase"/>
    <property type="match status" value="1"/>
</dbReference>
<dbReference type="Gene3D" id="1.10.1740.10">
    <property type="match status" value="1"/>
</dbReference>
<dbReference type="Gene3D" id="3.40.50.720">
    <property type="entry name" value="NAD(P)-binding Rossmann-like Domain"/>
    <property type="match status" value="1"/>
</dbReference>
<dbReference type="HAMAP" id="MF_00183">
    <property type="entry name" value="DXP_reductoisom"/>
    <property type="match status" value="1"/>
</dbReference>
<dbReference type="InterPro" id="IPR003821">
    <property type="entry name" value="DXP_reductoisomerase"/>
</dbReference>
<dbReference type="InterPro" id="IPR013644">
    <property type="entry name" value="DXP_reductoisomerase_C"/>
</dbReference>
<dbReference type="InterPro" id="IPR013512">
    <property type="entry name" value="DXP_reductoisomerase_N"/>
</dbReference>
<dbReference type="InterPro" id="IPR026877">
    <property type="entry name" value="DXPR_C"/>
</dbReference>
<dbReference type="InterPro" id="IPR036169">
    <property type="entry name" value="DXPR_C_sf"/>
</dbReference>
<dbReference type="InterPro" id="IPR036291">
    <property type="entry name" value="NAD(P)-bd_dom_sf"/>
</dbReference>
<dbReference type="NCBIfam" id="TIGR00243">
    <property type="entry name" value="Dxr"/>
    <property type="match status" value="1"/>
</dbReference>
<dbReference type="PANTHER" id="PTHR30525">
    <property type="entry name" value="1-DEOXY-D-XYLULOSE 5-PHOSPHATE REDUCTOISOMERASE"/>
    <property type="match status" value="1"/>
</dbReference>
<dbReference type="PANTHER" id="PTHR30525:SF0">
    <property type="entry name" value="1-DEOXY-D-XYLULOSE 5-PHOSPHATE REDUCTOISOMERASE, CHLOROPLASTIC"/>
    <property type="match status" value="1"/>
</dbReference>
<dbReference type="Pfam" id="PF08436">
    <property type="entry name" value="DXP_redisom_C"/>
    <property type="match status" value="1"/>
</dbReference>
<dbReference type="Pfam" id="PF02670">
    <property type="entry name" value="DXP_reductoisom"/>
    <property type="match status" value="1"/>
</dbReference>
<dbReference type="Pfam" id="PF13288">
    <property type="entry name" value="DXPR_C"/>
    <property type="match status" value="1"/>
</dbReference>
<dbReference type="PIRSF" id="PIRSF006205">
    <property type="entry name" value="Dxp_reductismrs"/>
    <property type="match status" value="1"/>
</dbReference>
<dbReference type="SUPFAM" id="SSF69055">
    <property type="entry name" value="1-deoxy-D-xylulose-5-phosphate reductoisomerase, C-terminal domain"/>
    <property type="match status" value="1"/>
</dbReference>
<dbReference type="SUPFAM" id="SSF55347">
    <property type="entry name" value="Glyceraldehyde-3-phosphate dehydrogenase-like, C-terminal domain"/>
    <property type="match status" value="1"/>
</dbReference>
<dbReference type="SUPFAM" id="SSF51735">
    <property type="entry name" value="NAD(P)-binding Rossmann-fold domains"/>
    <property type="match status" value="1"/>
</dbReference>
<feature type="chain" id="PRO_1000124109" description="1-deoxy-D-xylulose 5-phosphate reductoisomerase">
    <location>
        <begin position="1"/>
        <end position="394"/>
    </location>
</feature>
<feature type="binding site" evidence="1">
    <location>
        <position position="10"/>
    </location>
    <ligand>
        <name>NADPH</name>
        <dbReference type="ChEBI" id="CHEBI:57783"/>
    </ligand>
</feature>
<feature type="binding site" evidence="1">
    <location>
        <position position="11"/>
    </location>
    <ligand>
        <name>NADPH</name>
        <dbReference type="ChEBI" id="CHEBI:57783"/>
    </ligand>
</feature>
<feature type="binding site" evidence="1">
    <location>
        <position position="12"/>
    </location>
    <ligand>
        <name>NADPH</name>
        <dbReference type="ChEBI" id="CHEBI:57783"/>
    </ligand>
</feature>
<feature type="binding site" evidence="1">
    <location>
        <position position="13"/>
    </location>
    <ligand>
        <name>NADPH</name>
        <dbReference type="ChEBI" id="CHEBI:57783"/>
    </ligand>
</feature>
<feature type="binding site" evidence="1">
    <location>
        <position position="38"/>
    </location>
    <ligand>
        <name>NADPH</name>
        <dbReference type="ChEBI" id="CHEBI:57783"/>
    </ligand>
</feature>
<feature type="binding site" evidence="1">
    <location>
        <position position="39"/>
    </location>
    <ligand>
        <name>NADPH</name>
        <dbReference type="ChEBI" id="CHEBI:57783"/>
    </ligand>
</feature>
<feature type="binding site" evidence="1">
    <location>
        <position position="40"/>
    </location>
    <ligand>
        <name>NADPH</name>
        <dbReference type="ChEBI" id="CHEBI:57783"/>
    </ligand>
</feature>
<feature type="binding site" evidence="1">
    <location>
        <position position="123"/>
    </location>
    <ligand>
        <name>NADPH</name>
        <dbReference type="ChEBI" id="CHEBI:57783"/>
    </ligand>
</feature>
<feature type="binding site" evidence="1">
    <location>
        <position position="124"/>
    </location>
    <ligand>
        <name>1-deoxy-D-xylulose 5-phosphate</name>
        <dbReference type="ChEBI" id="CHEBI:57792"/>
    </ligand>
</feature>
<feature type="binding site" evidence="1">
    <location>
        <position position="125"/>
    </location>
    <ligand>
        <name>NADPH</name>
        <dbReference type="ChEBI" id="CHEBI:57783"/>
    </ligand>
</feature>
<feature type="binding site" evidence="1">
    <location>
        <position position="149"/>
    </location>
    <ligand>
        <name>Mn(2+)</name>
        <dbReference type="ChEBI" id="CHEBI:29035"/>
    </ligand>
</feature>
<feature type="binding site" evidence="1">
    <location>
        <position position="150"/>
    </location>
    <ligand>
        <name>1-deoxy-D-xylulose 5-phosphate</name>
        <dbReference type="ChEBI" id="CHEBI:57792"/>
    </ligand>
</feature>
<feature type="binding site" evidence="1">
    <location>
        <position position="151"/>
    </location>
    <ligand>
        <name>1-deoxy-D-xylulose 5-phosphate</name>
        <dbReference type="ChEBI" id="CHEBI:57792"/>
    </ligand>
</feature>
<feature type="binding site" evidence="1">
    <location>
        <position position="151"/>
    </location>
    <ligand>
        <name>Mn(2+)</name>
        <dbReference type="ChEBI" id="CHEBI:29035"/>
    </ligand>
</feature>
<feature type="binding site" evidence="1">
    <location>
        <position position="175"/>
    </location>
    <ligand>
        <name>1-deoxy-D-xylulose 5-phosphate</name>
        <dbReference type="ChEBI" id="CHEBI:57792"/>
    </ligand>
</feature>
<feature type="binding site" evidence="1">
    <location>
        <position position="198"/>
    </location>
    <ligand>
        <name>1-deoxy-D-xylulose 5-phosphate</name>
        <dbReference type="ChEBI" id="CHEBI:57792"/>
    </ligand>
</feature>
<feature type="binding site" evidence="1">
    <location>
        <position position="204"/>
    </location>
    <ligand>
        <name>NADPH</name>
        <dbReference type="ChEBI" id="CHEBI:57783"/>
    </ligand>
</feature>
<feature type="binding site" evidence="1">
    <location>
        <position position="211"/>
    </location>
    <ligand>
        <name>1-deoxy-D-xylulose 5-phosphate</name>
        <dbReference type="ChEBI" id="CHEBI:57792"/>
    </ligand>
</feature>
<feature type="binding site" evidence="1">
    <location>
        <position position="216"/>
    </location>
    <ligand>
        <name>1-deoxy-D-xylulose 5-phosphate</name>
        <dbReference type="ChEBI" id="CHEBI:57792"/>
    </ligand>
</feature>
<feature type="binding site" evidence="1">
    <location>
        <position position="217"/>
    </location>
    <ligand>
        <name>1-deoxy-D-xylulose 5-phosphate</name>
        <dbReference type="ChEBI" id="CHEBI:57792"/>
    </ligand>
</feature>
<feature type="binding site" evidence="1">
    <location>
        <position position="220"/>
    </location>
    <ligand>
        <name>1-deoxy-D-xylulose 5-phosphate</name>
        <dbReference type="ChEBI" id="CHEBI:57792"/>
    </ligand>
</feature>
<feature type="binding site" evidence="1">
    <location>
        <position position="220"/>
    </location>
    <ligand>
        <name>Mn(2+)</name>
        <dbReference type="ChEBI" id="CHEBI:29035"/>
    </ligand>
</feature>
<accession>A3PJG0</accession>
<proteinExistence type="inferred from homology"/>
<name>DXR_CERS1</name>
<keyword id="KW-0414">Isoprene biosynthesis</keyword>
<keyword id="KW-0464">Manganese</keyword>
<keyword id="KW-0479">Metal-binding</keyword>
<keyword id="KW-0521">NADP</keyword>
<keyword id="KW-0560">Oxidoreductase</keyword>
<reference key="1">
    <citation type="submission" date="2007-02" db="EMBL/GenBank/DDBJ databases">
        <title>Complete sequence of chromosome 1 of Rhodobacter sphaeroides ATCC 17029.</title>
        <authorList>
            <person name="Copeland A."/>
            <person name="Lucas S."/>
            <person name="Lapidus A."/>
            <person name="Barry K."/>
            <person name="Detter J.C."/>
            <person name="Glavina del Rio T."/>
            <person name="Hammon N."/>
            <person name="Israni S."/>
            <person name="Dalin E."/>
            <person name="Tice H."/>
            <person name="Pitluck S."/>
            <person name="Kiss H."/>
            <person name="Brettin T."/>
            <person name="Bruce D."/>
            <person name="Han C."/>
            <person name="Tapia R."/>
            <person name="Gilna P."/>
            <person name="Schmutz J."/>
            <person name="Larimer F."/>
            <person name="Land M."/>
            <person name="Hauser L."/>
            <person name="Kyrpides N."/>
            <person name="Mikhailova N."/>
            <person name="Richardson P."/>
            <person name="Mackenzie C."/>
            <person name="Choudhary M."/>
            <person name="Donohue T.J."/>
            <person name="Kaplan S."/>
        </authorList>
    </citation>
    <scope>NUCLEOTIDE SEQUENCE [LARGE SCALE GENOMIC DNA]</scope>
    <source>
        <strain>ATCC 17029 / ATH 2.4.9</strain>
    </source>
</reference>
<sequence length="394" mass="41909">MRSLSIFGATGSIGESTFDLVMRKGGPEAFRTVALTGGRNIRRLAEMARALKAELAVTAHEDCLPALREALAGTGTEVAGGAQAIAEAADRPADWTMSAIVGAAGLVPGMRALKHGRTLALANKESLVTAGQLLMRTAEENGATILPVDSEHSAVFQALAGEDTACVERVIITASGGPFRDWSLERIRACTVAEAQAHPNWSMGQRISIDSASMFNKALELIETREFFGFEPDRIEAVVHPQSIVHAMVGFCDGGLMAHLGPADMRHAIGFALNWPGRGEVPVARIDLAQIASLTFQKPDEERFPALRLARDVMAARGLSGAAFNAAKEIALDHFIAGRIGFLDMAAVVEETLAGVSTDPLFGKVPDALEEVLAMDHLARRAAEEAAGLRQQKR</sequence>
<organism>
    <name type="scientific">Cereibacter sphaeroides (strain ATCC 17029 / ATH 2.4.9)</name>
    <name type="common">Rhodobacter sphaeroides</name>
    <dbReference type="NCBI Taxonomy" id="349101"/>
    <lineage>
        <taxon>Bacteria</taxon>
        <taxon>Pseudomonadati</taxon>
        <taxon>Pseudomonadota</taxon>
        <taxon>Alphaproteobacteria</taxon>
        <taxon>Rhodobacterales</taxon>
        <taxon>Paracoccaceae</taxon>
        <taxon>Cereibacter</taxon>
    </lineage>
</organism>
<protein>
    <recommendedName>
        <fullName evidence="1">1-deoxy-D-xylulose 5-phosphate reductoisomerase</fullName>
        <shortName evidence="1">DXP reductoisomerase</shortName>
        <ecNumber evidence="1">1.1.1.267</ecNumber>
    </recommendedName>
    <alternativeName>
        <fullName evidence="1">1-deoxyxylulose-5-phosphate reductoisomerase</fullName>
    </alternativeName>
    <alternativeName>
        <fullName evidence="1">2-C-methyl-D-erythritol 4-phosphate synthase</fullName>
    </alternativeName>
</protein>
<gene>
    <name evidence="1" type="primary">dxr</name>
    <name type="ordered locus">Rsph17029_1366</name>
</gene>